<comment type="function">
    <text evidence="1 2">Probable mitochondrial transporter required for glutathione import into mitochondria. Glutathione, which plays key roles in oxidative metabolism, is produced exclusively in the cytosol and is imported in many organelles (By similarity). Mitochondrial glutathione is required for the activity and stability of proteins containing iron-sulfur clusters, as well as erythropoiesis (By similarity).</text>
</comment>
<comment type="catalytic activity">
    <reaction evidence="2">
        <text>glutathione(in) = glutathione(out)</text>
        <dbReference type="Rhea" id="RHEA:74819"/>
        <dbReference type="ChEBI" id="CHEBI:57925"/>
    </reaction>
</comment>
<comment type="subcellular location">
    <subcellularLocation>
        <location evidence="3">Mitochondrion inner membrane</location>
        <topology evidence="4">Multi-pass membrane protein</topology>
    </subcellularLocation>
</comment>
<comment type="similarity">
    <text evidence="5">Belongs to the mitochondrial carrier (TC 2.A.29) family.</text>
</comment>
<name>S2540_BOVIN</name>
<reference key="1">
    <citation type="submission" date="2006-08" db="EMBL/GenBank/DDBJ databases">
        <authorList>
            <consortium name="NIH - Mammalian Gene Collection (MGC) project"/>
        </authorList>
    </citation>
    <scope>NUCLEOTIDE SEQUENCE [LARGE SCALE MRNA]</scope>
    <source>
        <strain>Hereford</strain>
        <tissue>Fetal pons</tissue>
    </source>
</reference>
<sequence>MDPESEGPAVITVTPLQQMFASCTGAILTSLMVTPFDVVKIRLQAQNNPFPKGKCFLYSNGLMDHLCVCEEEGNKAWYKKPGHFQGTLDAFLKIIRNEGIKSLWSGLPPTLVMAVPATVIYFTCYDQLTALLRSKLGENESRIPIVAGIVARLGAVTVISPLELIRTKMQSKKFSYEELHRFVSKKVSEDGWISLWRGWAPTILRDVPFSAMYWYNYEVLKKWLCAKSGLYEPTFMINFTSGALSGSFAAVVTLPFDVVKTQKQTQLWIYESQKISMPLQMSTWTIMKNIVAKNGFSGLFTGLIPRLIKIAPACAVMISTYEFGKSFFQKQNAQRQRY</sequence>
<protein>
    <recommendedName>
        <fullName evidence="5">Mitochondrial glutathione transporter SLC25A40</fullName>
    </recommendedName>
    <alternativeName>
        <fullName evidence="5">Solute carrier family 25 member 40</fullName>
    </alternativeName>
</protein>
<proteinExistence type="evidence at transcript level"/>
<feature type="chain" id="PRO_0000291808" description="Mitochondrial glutathione transporter SLC25A40">
    <location>
        <begin position="1"/>
        <end position="338"/>
    </location>
</feature>
<feature type="transmembrane region" description="Helical; Name=1" evidence="4">
    <location>
        <begin position="19"/>
        <end position="39"/>
    </location>
</feature>
<feature type="transmembrane region" description="Helical; Name=2" evidence="4">
    <location>
        <begin position="103"/>
        <end position="123"/>
    </location>
</feature>
<feature type="transmembrane region" description="Helical; Name=3" evidence="4">
    <location>
        <begin position="145"/>
        <end position="165"/>
    </location>
</feature>
<feature type="transmembrane region" description="Helical; Name=4" evidence="4">
    <location>
        <begin position="199"/>
        <end position="220"/>
    </location>
</feature>
<feature type="transmembrane region" description="Helical; Name=5" evidence="4">
    <location>
        <begin position="239"/>
        <end position="259"/>
    </location>
</feature>
<feature type="transmembrane region" description="Helical; Name=6" evidence="4">
    <location>
        <begin position="298"/>
        <end position="318"/>
    </location>
</feature>
<feature type="repeat" description="Solcar 1">
    <location>
        <begin position="13"/>
        <end position="131"/>
    </location>
</feature>
<feature type="repeat" description="Solcar 2">
    <location>
        <begin position="139"/>
        <end position="223"/>
    </location>
</feature>
<feature type="repeat" description="Solcar 3">
    <location>
        <begin position="233"/>
        <end position="327"/>
    </location>
</feature>
<evidence type="ECO:0000250" key="1">
    <source>
        <dbReference type="UniProtKB" id="Q8BGP6"/>
    </source>
</evidence>
<evidence type="ECO:0000250" key="2">
    <source>
        <dbReference type="UniProtKB" id="Q8TBP6"/>
    </source>
</evidence>
<evidence type="ECO:0000250" key="3">
    <source>
        <dbReference type="UniProtKB" id="Q9BZJ4"/>
    </source>
</evidence>
<evidence type="ECO:0000255" key="4"/>
<evidence type="ECO:0000305" key="5"/>
<organism>
    <name type="scientific">Bos taurus</name>
    <name type="common">Bovine</name>
    <dbReference type="NCBI Taxonomy" id="9913"/>
    <lineage>
        <taxon>Eukaryota</taxon>
        <taxon>Metazoa</taxon>
        <taxon>Chordata</taxon>
        <taxon>Craniata</taxon>
        <taxon>Vertebrata</taxon>
        <taxon>Euteleostomi</taxon>
        <taxon>Mammalia</taxon>
        <taxon>Eutheria</taxon>
        <taxon>Laurasiatheria</taxon>
        <taxon>Artiodactyla</taxon>
        <taxon>Ruminantia</taxon>
        <taxon>Pecora</taxon>
        <taxon>Bovidae</taxon>
        <taxon>Bovinae</taxon>
        <taxon>Bos</taxon>
    </lineage>
</organism>
<gene>
    <name evidence="2" type="primary">SLC25A40</name>
</gene>
<dbReference type="EMBL" id="BC120163">
    <property type="protein sequence ID" value="AAI20164.1"/>
    <property type="molecule type" value="mRNA"/>
</dbReference>
<dbReference type="RefSeq" id="NP_001069767.1">
    <property type="nucleotide sequence ID" value="NM_001076299.3"/>
</dbReference>
<dbReference type="RefSeq" id="XP_059741716.1">
    <property type="nucleotide sequence ID" value="XM_059885733.1"/>
</dbReference>
<dbReference type="SMR" id="Q0VCH6"/>
<dbReference type="FunCoup" id="Q0VCH6">
    <property type="interactions" value="2558"/>
</dbReference>
<dbReference type="STRING" id="9913.ENSBTAP00000073043"/>
<dbReference type="Ensembl" id="ENSBTAT00000079624.2">
    <property type="protein sequence ID" value="ENSBTAP00000073043.1"/>
    <property type="gene ID" value="ENSBTAG00000054987.2"/>
</dbReference>
<dbReference type="GeneID" id="613948"/>
<dbReference type="KEGG" id="bta:613948"/>
<dbReference type="CTD" id="55972"/>
<dbReference type="VEuPathDB" id="HostDB:ENSBTAG00000054987"/>
<dbReference type="GeneTree" id="ENSGT00940000160249"/>
<dbReference type="InParanoid" id="Q0VCH6"/>
<dbReference type="OMA" id="YWWGYES"/>
<dbReference type="OrthoDB" id="1747031at2759"/>
<dbReference type="Proteomes" id="UP000009136">
    <property type="component" value="Chromosome 4"/>
</dbReference>
<dbReference type="Bgee" id="ENSBTAG00000054987">
    <property type="expression patterns" value="Expressed in uterine horn and 107 other cell types or tissues"/>
</dbReference>
<dbReference type="GO" id="GO:0005743">
    <property type="term" value="C:mitochondrial inner membrane"/>
    <property type="evidence" value="ECO:0007669"/>
    <property type="project" value="UniProtKB-SubCell"/>
</dbReference>
<dbReference type="GO" id="GO:0005739">
    <property type="term" value="C:mitochondrion"/>
    <property type="evidence" value="ECO:0000318"/>
    <property type="project" value="GO_Central"/>
</dbReference>
<dbReference type="GO" id="GO:0034634">
    <property type="term" value="F:glutathione transmembrane transporter activity"/>
    <property type="evidence" value="ECO:0000250"/>
    <property type="project" value="UniProtKB"/>
</dbReference>
<dbReference type="GO" id="GO:0170036">
    <property type="term" value="P:import into the mitochondrion"/>
    <property type="evidence" value="ECO:0000318"/>
    <property type="project" value="GO_Central"/>
</dbReference>
<dbReference type="FunFam" id="1.50.40.10:FF:000141">
    <property type="entry name" value="Mitochondrial carrier protein MTM1"/>
    <property type="match status" value="1"/>
</dbReference>
<dbReference type="Gene3D" id="1.50.40.10">
    <property type="entry name" value="Mitochondrial carrier domain"/>
    <property type="match status" value="1"/>
</dbReference>
<dbReference type="InterPro" id="IPR002067">
    <property type="entry name" value="Mit_carrier"/>
</dbReference>
<dbReference type="InterPro" id="IPR018108">
    <property type="entry name" value="Mitochondrial_sb/sol_carrier"/>
</dbReference>
<dbReference type="InterPro" id="IPR023395">
    <property type="entry name" value="Mt_carrier_dom_sf"/>
</dbReference>
<dbReference type="InterPro" id="IPR045315">
    <property type="entry name" value="Mtm1-like"/>
</dbReference>
<dbReference type="PANTHER" id="PTHR45760">
    <property type="entry name" value="FI19922P1-RELATED"/>
    <property type="match status" value="1"/>
</dbReference>
<dbReference type="PANTHER" id="PTHR45760:SF5">
    <property type="entry name" value="MITOCHONDRIAL GLUTATHIONE TRANSPORTER SLC25A40-RELATED"/>
    <property type="match status" value="1"/>
</dbReference>
<dbReference type="Pfam" id="PF00153">
    <property type="entry name" value="Mito_carr"/>
    <property type="match status" value="3"/>
</dbReference>
<dbReference type="PRINTS" id="PR00926">
    <property type="entry name" value="MITOCARRIER"/>
</dbReference>
<dbReference type="SUPFAM" id="SSF103506">
    <property type="entry name" value="Mitochondrial carrier"/>
    <property type="match status" value="1"/>
</dbReference>
<dbReference type="PROSITE" id="PS50920">
    <property type="entry name" value="SOLCAR"/>
    <property type="match status" value="3"/>
</dbReference>
<accession>Q0VCH6</accession>
<keyword id="KW-0472">Membrane</keyword>
<keyword id="KW-0496">Mitochondrion</keyword>
<keyword id="KW-0999">Mitochondrion inner membrane</keyword>
<keyword id="KW-1185">Reference proteome</keyword>
<keyword id="KW-0677">Repeat</keyword>
<keyword id="KW-0812">Transmembrane</keyword>
<keyword id="KW-1133">Transmembrane helix</keyword>
<keyword id="KW-0813">Transport</keyword>